<reference key="1">
    <citation type="submission" date="2007-10" db="EMBL/GenBank/DDBJ databases">
        <title>Complete sequence of chromosome of Desulforudis audaxviator MP104C.</title>
        <authorList>
            <person name="Copeland A."/>
            <person name="Lucas S."/>
            <person name="Lapidus A."/>
            <person name="Barry K."/>
            <person name="Glavina del Rio T."/>
            <person name="Dalin E."/>
            <person name="Tice H."/>
            <person name="Bruce D."/>
            <person name="Pitluck S."/>
            <person name="Lowry S.R."/>
            <person name="Larimer F."/>
            <person name="Land M.L."/>
            <person name="Hauser L."/>
            <person name="Kyrpides N."/>
            <person name="Ivanova N.N."/>
            <person name="Richardson P."/>
        </authorList>
    </citation>
    <scope>NUCLEOTIDE SEQUENCE [LARGE SCALE GENOMIC DNA]</scope>
    <source>
        <strain>MP104C</strain>
    </source>
</reference>
<evidence type="ECO:0000255" key="1">
    <source>
        <dbReference type="HAMAP-Rule" id="MF_01302"/>
    </source>
</evidence>
<evidence type="ECO:0000305" key="2"/>
<proteinExistence type="inferred from homology"/>
<name>RS8_DESAP</name>
<keyword id="KW-1185">Reference proteome</keyword>
<keyword id="KW-0687">Ribonucleoprotein</keyword>
<keyword id="KW-0689">Ribosomal protein</keyword>
<keyword id="KW-0694">RNA-binding</keyword>
<keyword id="KW-0699">rRNA-binding</keyword>
<accession>B1I1K2</accession>
<sequence>MLTDPIADYLTRIRNANTAFHETTEVPASGIKKALTEILKEEGFIRGFEVVDDGKQGKIRIYLKYGKNKERVITGLKRISKPGLRVYAGKEEVPRVLGGLGIAILSTSKGIMTDKEARKEGIGGEVICYIW</sequence>
<gene>
    <name evidence="1" type="primary">rpsH</name>
    <name type="ordered locus">Daud_0239</name>
</gene>
<comment type="function">
    <text evidence="1">One of the primary rRNA binding proteins, it binds directly to 16S rRNA central domain where it helps coordinate assembly of the platform of the 30S subunit.</text>
</comment>
<comment type="subunit">
    <text evidence="1">Part of the 30S ribosomal subunit. Contacts proteins S5 and S12.</text>
</comment>
<comment type="similarity">
    <text evidence="1">Belongs to the universal ribosomal protein uS8 family.</text>
</comment>
<dbReference type="EMBL" id="CP000860">
    <property type="protein sequence ID" value="ACA58800.1"/>
    <property type="molecule type" value="Genomic_DNA"/>
</dbReference>
<dbReference type="RefSeq" id="WP_012301392.1">
    <property type="nucleotide sequence ID" value="NC_010424.1"/>
</dbReference>
<dbReference type="SMR" id="B1I1K2"/>
<dbReference type="STRING" id="477974.Daud_0239"/>
<dbReference type="KEGG" id="dau:Daud_0239"/>
<dbReference type="eggNOG" id="COG0096">
    <property type="taxonomic scope" value="Bacteria"/>
</dbReference>
<dbReference type="HOGENOM" id="CLU_098428_0_2_9"/>
<dbReference type="OrthoDB" id="9802617at2"/>
<dbReference type="Proteomes" id="UP000008544">
    <property type="component" value="Chromosome"/>
</dbReference>
<dbReference type="GO" id="GO:1990904">
    <property type="term" value="C:ribonucleoprotein complex"/>
    <property type="evidence" value="ECO:0007669"/>
    <property type="project" value="UniProtKB-KW"/>
</dbReference>
<dbReference type="GO" id="GO:0005840">
    <property type="term" value="C:ribosome"/>
    <property type="evidence" value="ECO:0007669"/>
    <property type="project" value="UniProtKB-KW"/>
</dbReference>
<dbReference type="GO" id="GO:0019843">
    <property type="term" value="F:rRNA binding"/>
    <property type="evidence" value="ECO:0007669"/>
    <property type="project" value="UniProtKB-UniRule"/>
</dbReference>
<dbReference type="GO" id="GO:0003735">
    <property type="term" value="F:structural constituent of ribosome"/>
    <property type="evidence" value="ECO:0007669"/>
    <property type="project" value="InterPro"/>
</dbReference>
<dbReference type="GO" id="GO:0006412">
    <property type="term" value="P:translation"/>
    <property type="evidence" value="ECO:0007669"/>
    <property type="project" value="UniProtKB-UniRule"/>
</dbReference>
<dbReference type="FunFam" id="3.30.1370.30:FF:000002">
    <property type="entry name" value="30S ribosomal protein S8"/>
    <property type="match status" value="1"/>
</dbReference>
<dbReference type="FunFam" id="3.30.1490.10:FF:000001">
    <property type="entry name" value="30S ribosomal protein S8"/>
    <property type="match status" value="1"/>
</dbReference>
<dbReference type="Gene3D" id="3.30.1370.30">
    <property type="match status" value="1"/>
</dbReference>
<dbReference type="Gene3D" id="3.30.1490.10">
    <property type="match status" value="1"/>
</dbReference>
<dbReference type="HAMAP" id="MF_01302_B">
    <property type="entry name" value="Ribosomal_uS8_B"/>
    <property type="match status" value="1"/>
</dbReference>
<dbReference type="InterPro" id="IPR000630">
    <property type="entry name" value="Ribosomal_uS8"/>
</dbReference>
<dbReference type="InterPro" id="IPR047863">
    <property type="entry name" value="Ribosomal_uS8_CS"/>
</dbReference>
<dbReference type="InterPro" id="IPR035987">
    <property type="entry name" value="Ribosomal_uS8_sf"/>
</dbReference>
<dbReference type="NCBIfam" id="NF001109">
    <property type="entry name" value="PRK00136.1"/>
    <property type="match status" value="1"/>
</dbReference>
<dbReference type="PANTHER" id="PTHR11758">
    <property type="entry name" value="40S RIBOSOMAL PROTEIN S15A"/>
    <property type="match status" value="1"/>
</dbReference>
<dbReference type="Pfam" id="PF00410">
    <property type="entry name" value="Ribosomal_S8"/>
    <property type="match status" value="1"/>
</dbReference>
<dbReference type="SUPFAM" id="SSF56047">
    <property type="entry name" value="Ribosomal protein S8"/>
    <property type="match status" value="1"/>
</dbReference>
<dbReference type="PROSITE" id="PS00053">
    <property type="entry name" value="RIBOSOMAL_S8"/>
    <property type="match status" value="1"/>
</dbReference>
<organism>
    <name type="scientific">Desulforudis audaxviator (strain MP104C)</name>
    <dbReference type="NCBI Taxonomy" id="477974"/>
    <lineage>
        <taxon>Bacteria</taxon>
        <taxon>Bacillati</taxon>
        <taxon>Bacillota</taxon>
        <taxon>Clostridia</taxon>
        <taxon>Thermoanaerobacterales</taxon>
        <taxon>Candidatus Desulforudaceae</taxon>
        <taxon>Candidatus Desulforudis</taxon>
    </lineage>
</organism>
<feature type="chain" id="PRO_1000165325" description="Small ribosomal subunit protein uS8">
    <location>
        <begin position="1"/>
        <end position="131"/>
    </location>
</feature>
<protein>
    <recommendedName>
        <fullName evidence="1">Small ribosomal subunit protein uS8</fullName>
    </recommendedName>
    <alternativeName>
        <fullName evidence="2">30S ribosomal protein S8</fullName>
    </alternativeName>
</protein>